<accession>Q73FS2</accession>
<dbReference type="EC" id="2.7.4.9" evidence="1"/>
<dbReference type="EMBL" id="AE017196">
    <property type="protein sequence ID" value="AAS14897.1"/>
    <property type="status" value="ALT_INIT"/>
    <property type="molecule type" value="Genomic_DNA"/>
</dbReference>
<dbReference type="RefSeq" id="WP_038227975.1">
    <property type="nucleotide sequence ID" value="NZ_OX384529.1"/>
</dbReference>
<dbReference type="SMR" id="Q73FS2"/>
<dbReference type="EnsemblBacteria" id="AAS14897">
    <property type="protein sequence ID" value="AAS14897"/>
    <property type="gene ID" value="WD_1251"/>
</dbReference>
<dbReference type="GeneID" id="70036721"/>
<dbReference type="KEGG" id="wol:WD_1251"/>
<dbReference type="eggNOG" id="COG0125">
    <property type="taxonomic scope" value="Bacteria"/>
</dbReference>
<dbReference type="Proteomes" id="UP000008215">
    <property type="component" value="Chromosome"/>
</dbReference>
<dbReference type="GO" id="GO:0005829">
    <property type="term" value="C:cytosol"/>
    <property type="evidence" value="ECO:0007669"/>
    <property type="project" value="TreeGrafter"/>
</dbReference>
<dbReference type="GO" id="GO:0005524">
    <property type="term" value="F:ATP binding"/>
    <property type="evidence" value="ECO:0007669"/>
    <property type="project" value="UniProtKB-UniRule"/>
</dbReference>
<dbReference type="GO" id="GO:0004798">
    <property type="term" value="F:dTMP kinase activity"/>
    <property type="evidence" value="ECO:0007669"/>
    <property type="project" value="UniProtKB-UniRule"/>
</dbReference>
<dbReference type="GO" id="GO:0006233">
    <property type="term" value="P:dTDP biosynthetic process"/>
    <property type="evidence" value="ECO:0007669"/>
    <property type="project" value="InterPro"/>
</dbReference>
<dbReference type="GO" id="GO:0006235">
    <property type="term" value="P:dTTP biosynthetic process"/>
    <property type="evidence" value="ECO:0007669"/>
    <property type="project" value="UniProtKB-UniRule"/>
</dbReference>
<dbReference type="GO" id="GO:0006227">
    <property type="term" value="P:dUDP biosynthetic process"/>
    <property type="evidence" value="ECO:0007669"/>
    <property type="project" value="TreeGrafter"/>
</dbReference>
<dbReference type="CDD" id="cd01672">
    <property type="entry name" value="TMPK"/>
    <property type="match status" value="1"/>
</dbReference>
<dbReference type="FunFam" id="3.40.50.300:FF:000225">
    <property type="entry name" value="Thymidylate kinase"/>
    <property type="match status" value="1"/>
</dbReference>
<dbReference type="Gene3D" id="3.40.50.300">
    <property type="entry name" value="P-loop containing nucleotide triphosphate hydrolases"/>
    <property type="match status" value="1"/>
</dbReference>
<dbReference type="HAMAP" id="MF_00165">
    <property type="entry name" value="Thymidylate_kinase"/>
    <property type="match status" value="1"/>
</dbReference>
<dbReference type="InterPro" id="IPR027417">
    <property type="entry name" value="P-loop_NTPase"/>
</dbReference>
<dbReference type="InterPro" id="IPR039430">
    <property type="entry name" value="Thymidylate_kin-like_dom"/>
</dbReference>
<dbReference type="InterPro" id="IPR018095">
    <property type="entry name" value="Thymidylate_kin_CS"/>
</dbReference>
<dbReference type="InterPro" id="IPR018094">
    <property type="entry name" value="Thymidylate_kinase"/>
</dbReference>
<dbReference type="NCBIfam" id="TIGR00041">
    <property type="entry name" value="DTMP_kinase"/>
    <property type="match status" value="1"/>
</dbReference>
<dbReference type="PANTHER" id="PTHR10344">
    <property type="entry name" value="THYMIDYLATE KINASE"/>
    <property type="match status" value="1"/>
</dbReference>
<dbReference type="PANTHER" id="PTHR10344:SF4">
    <property type="entry name" value="UMP-CMP KINASE 2, MITOCHONDRIAL"/>
    <property type="match status" value="1"/>
</dbReference>
<dbReference type="Pfam" id="PF02223">
    <property type="entry name" value="Thymidylate_kin"/>
    <property type="match status" value="1"/>
</dbReference>
<dbReference type="SUPFAM" id="SSF52540">
    <property type="entry name" value="P-loop containing nucleoside triphosphate hydrolases"/>
    <property type="match status" value="1"/>
</dbReference>
<dbReference type="PROSITE" id="PS01331">
    <property type="entry name" value="THYMIDYLATE_KINASE"/>
    <property type="match status" value="1"/>
</dbReference>
<protein>
    <recommendedName>
        <fullName evidence="1">Thymidylate kinase</fullName>
        <ecNumber evidence="1">2.7.4.9</ecNumber>
    </recommendedName>
    <alternativeName>
        <fullName evidence="1">dTMP kinase</fullName>
    </alternativeName>
</protein>
<sequence length="196" mass="22334">MFITFEGIDGSGKTTQSKLLANHFKQIRGENNVVLTREPGGTNFAEKVRGVLLTNNIDSISELLLLISMRREHMKKLILPALAEGKIVICDRFIDSTIAYQGYGFGVDLRLIRDLHKLVEIKYPDITFILDIDVKVGLNRAKDKNKYEEMDVNFYNKVRKGFQEIAIKEPVRCSVITGIETKNDNHVHNEIIDKIT</sequence>
<reference key="1">
    <citation type="journal article" date="2004" name="PLoS Biol.">
        <title>Phylogenomics of the reproductive parasite Wolbachia pipientis wMel: a streamlined genome overrun by mobile genetic elements.</title>
        <authorList>
            <person name="Wu M."/>
            <person name="Sun L.V."/>
            <person name="Vamathevan J.J."/>
            <person name="Riegler M."/>
            <person name="DeBoy R.T."/>
            <person name="Brownlie J.C."/>
            <person name="McGraw E.A."/>
            <person name="Martin W."/>
            <person name="Esser C."/>
            <person name="Ahmadinejad N."/>
            <person name="Wiegand C."/>
            <person name="Madupu R."/>
            <person name="Beanan M.J."/>
            <person name="Brinkac L.M."/>
            <person name="Daugherty S.C."/>
            <person name="Durkin A.S."/>
            <person name="Kolonay J.F."/>
            <person name="Nelson W.C."/>
            <person name="Mohamoud Y."/>
            <person name="Lee P."/>
            <person name="Berry K.J."/>
            <person name="Young M.B."/>
            <person name="Utterback T.R."/>
            <person name="Weidman J.F."/>
            <person name="Nierman W.C."/>
            <person name="Paulsen I.T."/>
            <person name="Nelson K.E."/>
            <person name="Tettelin H."/>
            <person name="O'Neill S.L."/>
            <person name="Eisen J.A."/>
        </authorList>
    </citation>
    <scope>NUCLEOTIDE SEQUENCE [LARGE SCALE GENOMIC DNA]</scope>
</reference>
<proteinExistence type="inferred from homology"/>
<gene>
    <name evidence="1" type="primary">tmk</name>
    <name type="ordered locus">WD_1251</name>
</gene>
<comment type="function">
    <text evidence="1">Phosphorylation of dTMP to form dTDP in both de novo and salvage pathways of dTTP synthesis.</text>
</comment>
<comment type="catalytic activity">
    <reaction evidence="1">
        <text>dTMP + ATP = dTDP + ADP</text>
        <dbReference type="Rhea" id="RHEA:13517"/>
        <dbReference type="ChEBI" id="CHEBI:30616"/>
        <dbReference type="ChEBI" id="CHEBI:58369"/>
        <dbReference type="ChEBI" id="CHEBI:63528"/>
        <dbReference type="ChEBI" id="CHEBI:456216"/>
        <dbReference type="EC" id="2.7.4.9"/>
    </reaction>
</comment>
<comment type="similarity">
    <text evidence="1">Belongs to the thymidylate kinase family.</text>
</comment>
<comment type="sequence caution" evidence="2">
    <conflict type="erroneous initiation">
        <sequence resource="EMBL-CDS" id="AAS14897"/>
    </conflict>
</comment>
<feature type="chain" id="PRO_0000155373" description="Thymidylate kinase">
    <location>
        <begin position="1"/>
        <end position="196"/>
    </location>
</feature>
<feature type="binding site" evidence="1">
    <location>
        <begin position="7"/>
        <end position="14"/>
    </location>
    <ligand>
        <name>ATP</name>
        <dbReference type="ChEBI" id="CHEBI:30616"/>
    </ligand>
</feature>
<organism>
    <name type="scientific">Wolbachia pipientis wMel</name>
    <dbReference type="NCBI Taxonomy" id="163164"/>
    <lineage>
        <taxon>Bacteria</taxon>
        <taxon>Pseudomonadati</taxon>
        <taxon>Pseudomonadota</taxon>
        <taxon>Alphaproteobacteria</taxon>
        <taxon>Rickettsiales</taxon>
        <taxon>Anaplasmataceae</taxon>
        <taxon>Wolbachieae</taxon>
        <taxon>Wolbachia</taxon>
    </lineage>
</organism>
<evidence type="ECO:0000255" key="1">
    <source>
        <dbReference type="HAMAP-Rule" id="MF_00165"/>
    </source>
</evidence>
<evidence type="ECO:0000305" key="2"/>
<keyword id="KW-0067">ATP-binding</keyword>
<keyword id="KW-0418">Kinase</keyword>
<keyword id="KW-0545">Nucleotide biosynthesis</keyword>
<keyword id="KW-0547">Nucleotide-binding</keyword>
<keyword id="KW-0808">Transferase</keyword>
<name>KTHY_WOLPM</name>